<reference key="1">
    <citation type="journal article" date="2001" name="Proc. Natl. Acad. Sci. U.S.A.">
        <title>Analysis of the chromosome sequence of the legume symbiont Sinorhizobium meliloti strain 1021.</title>
        <authorList>
            <person name="Capela D."/>
            <person name="Barloy-Hubler F."/>
            <person name="Gouzy J."/>
            <person name="Bothe G."/>
            <person name="Ampe F."/>
            <person name="Batut J."/>
            <person name="Boistard P."/>
            <person name="Becker A."/>
            <person name="Boutry M."/>
            <person name="Cadieu E."/>
            <person name="Dreano S."/>
            <person name="Gloux S."/>
            <person name="Godrie T."/>
            <person name="Goffeau A."/>
            <person name="Kahn D."/>
            <person name="Kiss E."/>
            <person name="Lelaure V."/>
            <person name="Masuy D."/>
            <person name="Pohl T."/>
            <person name="Portetelle D."/>
            <person name="Puehler A."/>
            <person name="Purnelle B."/>
            <person name="Ramsperger U."/>
            <person name="Renard C."/>
            <person name="Thebault P."/>
            <person name="Vandenbol M."/>
            <person name="Weidner S."/>
            <person name="Galibert F."/>
        </authorList>
    </citation>
    <scope>NUCLEOTIDE SEQUENCE [LARGE SCALE GENOMIC DNA]</scope>
    <source>
        <strain>1021</strain>
    </source>
</reference>
<reference key="2">
    <citation type="journal article" date="2001" name="Science">
        <title>The composite genome of the legume symbiont Sinorhizobium meliloti.</title>
        <authorList>
            <person name="Galibert F."/>
            <person name="Finan T.M."/>
            <person name="Long S.R."/>
            <person name="Puehler A."/>
            <person name="Abola P."/>
            <person name="Ampe F."/>
            <person name="Barloy-Hubler F."/>
            <person name="Barnett M.J."/>
            <person name="Becker A."/>
            <person name="Boistard P."/>
            <person name="Bothe G."/>
            <person name="Boutry M."/>
            <person name="Bowser L."/>
            <person name="Buhrmester J."/>
            <person name="Cadieu E."/>
            <person name="Capela D."/>
            <person name="Chain P."/>
            <person name="Cowie A."/>
            <person name="Davis R.W."/>
            <person name="Dreano S."/>
            <person name="Federspiel N.A."/>
            <person name="Fisher R.F."/>
            <person name="Gloux S."/>
            <person name="Godrie T."/>
            <person name="Goffeau A."/>
            <person name="Golding B."/>
            <person name="Gouzy J."/>
            <person name="Gurjal M."/>
            <person name="Hernandez-Lucas I."/>
            <person name="Hong A."/>
            <person name="Huizar L."/>
            <person name="Hyman R.W."/>
            <person name="Jones T."/>
            <person name="Kahn D."/>
            <person name="Kahn M.L."/>
            <person name="Kalman S."/>
            <person name="Keating D.H."/>
            <person name="Kiss E."/>
            <person name="Komp C."/>
            <person name="Lelaure V."/>
            <person name="Masuy D."/>
            <person name="Palm C."/>
            <person name="Peck M.C."/>
            <person name="Pohl T.M."/>
            <person name="Portetelle D."/>
            <person name="Purnelle B."/>
            <person name="Ramsperger U."/>
            <person name="Surzycki R."/>
            <person name="Thebault P."/>
            <person name="Vandenbol M."/>
            <person name="Vorhoelter F.J."/>
            <person name="Weidner S."/>
            <person name="Wells D.H."/>
            <person name="Wong K."/>
            <person name="Yeh K.-C."/>
            <person name="Batut J."/>
        </authorList>
    </citation>
    <scope>NUCLEOTIDE SEQUENCE [LARGE SCALE GENOMIC DNA]</scope>
    <source>
        <strain>1021</strain>
    </source>
</reference>
<keyword id="KW-1185">Reference proteome</keyword>
<keyword id="KW-0687">Ribonucleoprotein</keyword>
<keyword id="KW-0689">Ribosomal protein</keyword>
<organism>
    <name type="scientific">Rhizobium meliloti (strain 1021)</name>
    <name type="common">Ensifer meliloti</name>
    <name type="synonym">Sinorhizobium meliloti</name>
    <dbReference type="NCBI Taxonomy" id="266834"/>
    <lineage>
        <taxon>Bacteria</taxon>
        <taxon>Pseudomonadati</taxon>
        <taxon>Pseudomonadota</taxon>
        <taxon>Alphaproteobacteria</taxon>
        <taxon>Hyphomicrobiales</taxon>
        <taxon>Rhizobiaceae</taxon>
        <taxon>Sinorhizobium/Ensifer group</taxon>
        <taxon>Sinorhizobium</taxon>
    </lineage>
</organism>
<feature type="chain" id="PRO_0000167231" description="Small ribosomal subunit protein bS16">
    <location>
        <begin position="1"/>
        <end position="124"/>
    </location>
</feature>
<feature type="region of interest" description="Disordered" evidence="2">
    <location>
        <begin position="80"/>
        <end position="124"/>
    </location>
</feature>
<feature type="compositionally biased region" description="Basic and acidic residues" evidence="2">
    <location>
        <begin position="99"/>
        <end position="113"/>
    </location>
</feature>
<feature type="compositionally biased region" description="Low complexity" evidence="2">
    <location>
        <begin position="114"/>
        <end position="124"/>
    </location>
</feature>
<comment type="similarity">
    <text evidence="1">Belongs to the bacterial ribosomal protein bS16 family.</text>
</comment>
<proteinExistence type="inferred from homology"/>
<accession>Q92L43</accession>
<sequence length="124" mass="13735">MALKIRLARGGSKKRPYYQIVVADARSPRDGRFLEKLGSWNPMLAKDDEKRIELNAERVQHWIAQGAQPTDRVMRFLDQAGLAKRPARNNPTKAQPGKKAQERAAEAKQKAEEAAAAASEAAAE</sequence>
<gene>
    <name evidence="1" type="primary">rpsP</name>
    <name type="ordered locus">R03242</name>
    <name type="ORF">SMc03859</name>
</gene>
<protein>
    <recommendedName>
        <fullName evidence="1">Small ribosomal subunit protein bS16</fullName>
    </recommendedName>
    <alternativeName>
        <fullName evidence="3">30S ribosomal protein S16</fullName>
    </alternativeName>
</protein>
<name>RS16_RHIME</name>
<dbReference type="EMBL" id="AL591688">
    <property type="protein sequence ID" value="CAC47821.1"/>
    <property type="molecule type" value="Genomic_DNA"/>
</dbReference>
<dbReference type="RefSeq" id="NP_387348.1">
    <property type="nucleotide sequence ID" value="NC_003047.1"/>
</dbReference>
<dbReference type="RefSeq" id="WP_003529742.1">
    <property type="nucleotide sequence ID" value="NC_003047.1"/>
</dbReference>
<dbReference type="SMR" id="Q92L43"/>
<dbReference type="EnsemblBacteria" id="CAC47821">
    <property type="protein sequence ID" value="CAC47821"/>
    <property type="gene ID" value="SMc03859"/>
</dbReference>
<dbReference type="GeneID" id="89574220"/>
<dbReference type="KEGG" id="sme:SMc03859"/>
<dbReference type="PATRIC" id="fig|266834.11.peg.4795"/>
<dbReference type="eggNOG" id="COG0228">
    <property type="taxonomic scope" value="Bacteria"/>
</dbReference>
<dbReference type="HOGENOM" id="CLU_100590_3_1_5"/>
<dbReference type="OrthoDB" id="9807878at2"/>
<dbReference type="Proteomes" id="UP000001976">
    <property type="component" value="Chromosome"/>
</dbReference>
<dbReference type="GO" id="GO:0005737">
    <property type="term" value="C:cytoplasm"/>
    <property type="evidence" value="ECO:0007669"/>
    <property type="project" value="UniProtKB-ARBA"/>
</dbReference>
<dbReference type="GO" id="GO:0015935">
    <property type="term" value="C:small ribosomal subunit"/>
    <property type="evidence" value="ECO:0007669"/>
    <property type="project" value="TreeGrafter"/>
</dbReference>
<dbReference type="GO" id="GO:0003735">
    <property type="term" value="F:structural constituent of ribosome"/>
    <property type="evidence" value="ECO:0007669"/>
    <property type="project" value="InterPro"/>
</dbReference>
<dbReference type="GO" id="GO:0006412">
    <property type="term" value="P:translation"/>
    <property type="evidence" value="ECO:0007669"/>
    <property type="project" value="UniProtKB-UniRule"/>
</dbReference>
<dbReference type="Gene3D" id="3.30.1320.10">
    <property type="match status" value="1"/>
</dbReference>
<dbReference type="HAMAP" id="MF_00385">
    <property type="entry name" value="Ribosomal_bS16"/>
    <property type="match status" value="1"/>
</dbReference>
<dbReference type="InterPro" id="IPR000307">
    <property type="entry name" value="Ribosomal_bS16"/>
</dbReference>
<dbReference type="InterPro" id="IPR023803">
    <property type="entry name" value="Ribosomal_bS16_dom_sf"/>
</dbReference>
<dbReference type="NCBIfam" id="TIGR00002">
    <property type="entry name" value="S16"/>
    <property type="match status" value="1"/>
</dbReference>
<dbReference type="PANTHER" id="PTHR12919">
    <property type="entry name" value="30S RIBOSOMAL PROTEIN S16"/>
    <property type="match status" value="1"/>
</dbReference>
<dbReference type="PANTHER" id="PTHR12919:SF20">
    <property type="entry name" value="SMALL RIBOSOMAL SUBUNIT PROTEIN BS16M"/>
    <property type="match status" value="1"/>
</dbReference>
<dbReference type="Pfam" id="PF00886">
    <property type="entry name" value="Ribosomal_S16"/>
    <property type="match status" value="1"/>
</dbReference>
<dbReference type="SUPFAM" id="SSF54565">
    <property type="entry name" value="Ribosomal protein S16"/>
    <property type="match status" value="1"/>
</dbReference>
<evidence type="ECO:0000255" key="1">
    <source>
        <dbReference type="HAMAP-Rule" id="MF_00385"/>
    </source>
</evidence>
<evidence type="ECO:0000256" key="2">
    <source>
        <dbReference type="SAM" id="MobiDB-lite"/>
    </source>
</evidence>
<evidence type="ECO:0000305" key="3"/>